<accession>A8ALE6</accession>
<reference key="1">
    <citation type="submission" date="2007-08" db="EMBL/GenBank/DDBJ databases">
        <authorList>
            <consortium name="The Citrobacter koseri Genome Sequencing Project"/>
            <person name="McClelland M."/>
            <person name="Sanderson E.K."/>
            <person name="Porwollik S."/>
            <person name="Spieth J."/>
            <person name="Clifton W.S."/>
            <person name="Latreille P."/>
            <person name="Courtney L."/>
            <person name="Wang C."/>
            <person name="Pepin K."/>
            <person name="Bhonagiri V."/>
            <person name="Nash W."/>
            <person name="Johnson M."/>
            <person name="Thiruvilangam P."/>
            <person name="Wilson R."/>
        </authorList>
    </citation>
    <scope>NUCLEOTIDE SEQUENCE [LARGE SCALE GENOMIC DNA]</scope>
    <source>
        <strain>ATCC BAA-895 / CDC 4225-83 / SGSC4696</strain>
    </source>
</reference>
<keyword id="KW-0030">Aminoacyl-tRNA synthetase</keyword>
<keyword id="KW-0067">ATP-binding</keyword>
<keyword id="KW-0436">Ligase</keyword>
<keyword id="KW-0479">Metal-binding</keyword>
<keyword id="KW-0547">Nucleotide-binding</keyword>
<keyword id="KW-1185">Reference proteome</keyword>
<keyword id="KW-0862">Zinc</keyword>
<feature type="chain" id="PRO_1000024352" description="Glutamyl-Q tRNA(Asp) synthetase">
    <location>
        <begin position="1"/>
        <end position="298"/>
    </location>
</feature>
<feature type="short sequence motif" description="'HIGH' region">
    <location>
        <begin position="12"/>
        <end position="22"/>
    </location>
</feature>
<feature type="short sequence motif" description="'KMSKS' region">
    <location>
        <begin position="228"/>
        <end position="232"/>
    </location>
</feature>
<feature type="binding site" evidence="1">
    <location>
        <begin position="9"/>
        <end position="13"/>
    </location>
    <ligand>
        <name>L-glutamate</name>
        <dbReference type="ChEBI" id="CHEBI:29985"/>
    </ligand>
</feature>
<feature type="binding site" evidence="1">
    <location>
        <position position="45"/>
    </location>
    <ligand>
        <name>L-glutamate</name>
        <dbReference type="ChEBI" id="CHEBI:29985"/>
    </ligand>
</feature>
<feature type="binding site" evidence="1">
    <location>
        <position position="101"/>
    </location>
    <ligand>
        <name>Zn(2+)</name>
        <dbReference type="ChEBI" id="CHEBI:29105"/>
    </ligand>
</feature>
<feature type="binding site" evidence="1">
    <location>
        <position position="103"/>
    </location>
    <ligand>
        <name>Zn(2+)</name>
        <dbReference type="ChEBI" id="CHEBI:29105"/>
    </ligand>
</feature>
<feature type="binding site" evidence="1">
    <location>
        <position position="115"/>
    </location>
    <ligand>
        <name>Zn(2+)</name>
        <dbReference type="ChEBI" id="CHEBI:29105"/>
    </ligand>
</feature>
<feature type="binding site" evidence="1">
    <location>
        <position position="119"/>
    </location>
    <ligand>
        <name>Zn(2+)</name>
        <dbReference type="ChEBI" id="CHEBI:29105"/>
    </ligand>
</feature>
<feature type="binding site" evidence="1">
    <location>
        <position position="172"/>
    </location>
    <ligand>
        <name>L-glutamate</name>
        <dbReference type="ChEBI" id="CHEBI:29985"/>
    </ligand>
</feature>
<feature type="binding site" evidence="1">
    <location>
        <position position="190"/>
    </location>
    <ligand>
        <name>L-glutamate</name>
        <dbReference type="ChEBI" id="CHEBI:29985"/>
    </ligand>
</feature>
<feature type="binding site" evidence="1">
    <location>
        <position position="231"/>
    </location>
    <ligand>
        <name>ATP</name>
        <dbReference type="ChEBI" id="CHEBI:30616"/>
    </ligand>
</feature>
<evidence type="ECO:0000255" key="1">
    <source>
        <dbReference type="HAMAP-Rule" id="MF_01428"/>
    </source>
</evidence>
<protein>
    <recommendedName>
        <fullName evidence="1">Glutamyl-Q tRNA(Asp) synthetase</fullName>
        <shortName evidence="1">Glu-Q-RSs</shortName>
        <ecNumber evidence="1">6.1.1.-</ecNumber>
    </recommendedName>
</protein>
<comment type="function">
    <text evidence="1">Catalyzes the tRNA-independent activation of glutamate in presence of ATP and the subsequent transfer of glutamate onto a tRNA(Asp). Glutamate is transferred on the 2-amino-5-(4,5-dihydroxy-2-cyclopenten-1-yl) moiety of the queuosine in the wobble position of the QUC anticodon.</text>
</comment>
<comment type="cofactor">
    <cofactor evidence="1">
        <name>Zn(2+)</name>
        <dbReference type="ChEBI" id="CHEBI:29105"/>
    </cofactor>
    <text evidence="1">Binds 1 zinc ion per subunit.</text>
</comment>
<comment type="similarity">
    <text evidence="1">Belongs to the class-I aminoacyl-tRNA synthetase family. GluQ subfamily.</text>
</comment>
<name>GLUQ_CITK8</name>
<sequence length="298" mass="33701">MTNAHYIGRFAPSPSGELHFGSLIAALGSYLRARSQHGIWRVRIEDIDPPREVPGAAETILRQLEHYGLHWDGDILWQSQRHDAYRDALAWLRQQNLSYYCTCPRARIQRIGGVYDGHCRTLQHGPENAAVRIKQFSPVMQFHDVLRGDIQADPLLAREDFIIHRRDGLFAYNLAVVVDDHFQGVTEIVRGADLIEPTVRQISLYQQFGWRAPDYIHLPLALNEQGAKLSKQNHAPALPEGDPRPVLIAALRFLGQNATAQWQDMHTDELLQYAVDNWTLTTVPESASVNPAFSNASC</sequence>
<dbReference type="EC" id="6.1.1.-" evidence="1"/>
<dbReference type="EMBL" id="CP000822">
    <property type="protein sequence ID" value="ABV14309.1"/>
    <property type="molecule type" value="Genomic_DNA"/>
</dbReference>
<dbReference type="SMR" id="A8ALE6"/>
<dbReference type="STRING" id="290338.CKO_03225"/>
<dbReference type="GeneID" id="45137005"/>
<dbReference type="KEGG" id="cko:CKO_03225"/>
<dbReference type="HOGENOM" id="CLU_015768_0_1_6"/>
<dbReference type="OrthoDB" id="9807503at2"/>
<dbReference type="Proteomes" id="UP000008148">
    <property type="component" value="Chromosome"/>
</dbReference>
<dbReference type="GO" id="GO:0005829">
    <property type="term" value="C:cytosol"/>
    <property type="evidence" value="ECO:0007669"/>
    <property type="project" value="TreeGrafter"/>
</dbReference>
<dbReference type="GO" id="GO:0005524">
    <property type="term" value="F:ATP binding"/>
    <property type="evidence" value="ECO:0007669"/>
    <property type="project" value="UniProtKB-KW"/>
</dbReference>
<dbReference type="GO" id="GO:0004818">
    <property type="term" value="F:glutamate-tRNA ligase activity"/>
    <property type="evidence" value="ECO:0007669"/>
    <property type="project" value="TreeGrafter"/>
</dbReference>
<dbReference type="GO" id="GO:0008270">
    <property type="term" value="F:zinc ion binding"/>
    <property type="evidence" value="ECO:0007669"/>
    <property type="project" value="UniProtKB-UniRule"/>
</dbReference>
<dbReference type="GO" id="GO:0006424">
    <property type="term" value="P:glutamyl-tRNA aminoacylation"/>
    <property type="evidence" value="ECO:0007669"/>
    <property type="project" value="InterPro"/>
</dbReference>
<dbReference type="GO" id="GO:0006400">
    <property type="term" value="P:tRNA modification"/>
    <property type="evidence" value="ECO:0007669"/>
    <property type="project" value="InterPro"/>
</dbReference>
<dbReference type="FunFam" id="3.40.50.620:FF:000093">
    <property type="entry name" value="Glutamyl-Q tRNA(Asp) synthetase"/>
    <property type="match status" value="1"/>
</dbReference>
<dbReference type="Gene3D" id="3.40.50.620">
    <property type="entry name" value="HUPs"/>
    <property type="match status" value="1"/>
</dbReference>
<dbReference type="HAMAP" id="MF_01428">
    <property type="entry name" value="Glu_Q_tRNA_synth"/>
    <property type="match status" value="1"/>
</dbReference>
<dbReference type="InterPro" id="IPR022380">
    <property type="entry name" value="Glu-Q_tRNA(Asp)_Synthase"/>
</dbReference>
<dbReference type="InterPro" id="IPR000924">
    <property type="entry name" value="Glu/Gln-tRNA-synth"/>
</dbReference>
<dbReference type="InterPro" id="IPR020058">
    <property type="entry name" value="Glu/Gln-tRNA-synth_Ib_cat-dom"/>
</dbReference>
<dbReference type="InterPro" id="IPR049940">
    <property type="entry name" value="GluQ/Sye"/>
</dbReference>
<dbReference type="InterPro" id="IPR014729">
    <property type="entry name" value="Rossmann-like_a/b/a_fold"/>
</dbReference>
<dbReference type="NCBIfam" id="NF004312">
    <property type="entry name" value="PRK05710.1-1"/>
    <property type="match status" value="1"/>
</dbReference>
<dbReference type="NCBIfam" id="NF004314">
    <property type="entry name" value="PRK05710.1-3"/>
    <property type="match status" value="1"/>
</dbReference>
<dbReference type="NCBIfam" id="TIGR03838">
    <property type="entry name" value="queuosine_YadB"/>
    <property type="match status" value="1"/>
</dbReference>
<dbReference type="PANTHER" id="PTHR43311">
    <property type="entry name" value="GLUTAMATE--TRNA LIGASE"/>
    <property type="match status" value="1"/>
</dbReference>
<dbReference type="PANTHER" id="PTHR43311:SF1">
    <property type="entry name" value="GLUTAMYL-Q TRNA(ASP) SYNTHETASE"/>
    <property type="match status" value="1"/>
</dbReference>
<dbReference type="Pfam" id="PF00749">
    <property type="entry name" value="tRNA-synt_1c"/>
    <property type="match status" value="1"/>
</dbReference>
<dbReference type="PRINTS" id="PR00987">
    <property type="entry name" value="TRNASYNTHGLU"/>
</dbReference>
<dbReference type="SUPFAM" id="SSF52374">
    <property type="entry name" value="Nucleotidylyl transferase"/>
    <property type="match status" value="1"/>
</dbReference>
<gene>
    <name evidence="1" type="primary">gluQ</name>
    <name type="ordered locus">CKO_03225</name>
</gene>
<proteinExistence type="inferred from homology"/>
<organism>
    <name type="scientific">Citrobacter koseri (strain ATCC BAA-895 / CDC 4225-83 / SGSC4696)</name>
    <dbReference type="NCBI Taxonomy" id="290338"/>
    <lineage>
        <taxon>Bacteria</taxon>
        <taxon>Pseudomonadati</taxon>
        <taxon>Pseudomonadota</taxon>
        <taxon>Gammaproteobacteria</taxon>
        <taxon>Enterobacterales</taxon>
        <taxon>Enterobacteriaceae</taxon>
        <taxon>Citrobacter</taxon>
    </lineage>
</organism>